<name>RSGA_PSEFS</name>
<feature type="chain" id="PRO_1000216051" description="Small ribosomal subunit biogenesis GTPase RsgA">
    <location>
        <begin position="1"/>
        <end position="343"/>
    </location>
</feature>
<feature type="domain" description="CP-type G" evidence="2">
    <location>
        <begin position="116"/>
        <end position="275"/>
    </location>
</feature>
<feature type="binding site" evidence="1">
    <location>
        <begin position="163"/>
        <end position="166"/>
    </location>
    <ligand>
        <name>GTP</name>
        <dbReference type="ChEBI" id="CHEBI:37565"/>
    </ligand>
</feature>
<feature type="binding site" evidence="1">
    <location>
        <begin position="217"/>
        <end position="225"/>
    </location>
    <ligand>
        <name>GTP</name>
        <dbReference type="ChEBI" id="CHEBI:37565"/>
    </ligand>
</feature>
<feature type="binding site" evidence="1">
    <location>
        <position position="299"/>
    </location>
    <ligand>
        <name>Zn(2+)</name>
        <dbReference type="ChEBI" id="CHEBI:29105"/>
    </ligand>
</feature>
<feature type="binding site" evidence="1">
    <location>
        <position position="304"/>
    </location>
    <ligand>
        <name>Zn(2+)</name>
        <dbReference type="ChEBI" id="CHEBI:29105"/>
    </ligand>
</feature>
<feature type="binding site" evidence="1">
    <location>
        <position position="306"/>
    </location>
    <ligand>
        <name>Zn(2+)</name>
        <dbReference type="ChEBI" id="CHEBI:29105"/>
    </ligand>
</feature>
<feature type="binding site" evidence="1">
    <location>
        <position position="312"/>
    </location>
    <ligand>
        <name>Zn(2+)</name>
        <dbReference type="ChEBI" id="CHEBI:29105"/>
    </ligand>
</feature>
<sequence>MAKRQLNRRQNWRIEKIQGERAARAAKRESSAVEALEGGDLGPEQTGLVIAHFGVQVEVEALEGELAGSVSRCHLRANLPALVTGDKVVWRAGNQGIGVIVAQLPRTTELRRPDSRGQLKPVAANVDMIVIVFAPLPEPHANLIDRYLVAAEHAGIRPLLLLNKFDLIDEQNAPALNALLAVYRTLGYPVLEVSAHHGNGMEQLQQQLDGRISVFVGQSGVGKSSLVNSLLPEVDTRVGPLSELSGQGTHTTTTARLFHFPGGGELIDSPGIREFGLGHVSRSDVEAGFIEFNDLIGTCRFRDCKHDREPGCALLKALEDGRVQQQRMNSYRSIIASLPESSY</sequence>
<gene>
    <name evidence="1" type="primary">rsgA</name>
    <name type="ordered locus">PFLU_0511</name>
</gene>
<comment type="function">
    <text evidence="1">One of several proteins that assist in the late maturation steps of the functional core of the 30S ribosomal subunit. Helps release RbfA from mature subunits. May play a role in the assembly of ribosomal proteins into the subunit. Circularly permuted GTPase that catalyzes slow GTP hydrolysis, GTPase activity is stimulated by the 30S ribosomal subunit.</text>
</comment>
<comment type="cofactor">
    <cofactor evidence="1">
        <name>Zn(2+)</name>
        <dbReference type="ChEBI" id="CHEBI:29105"/>
    </cofactor>
    <text evidence="1">Binds 1 zinc ion per subunit.</text>
</comment>
<comment type="subunit">
    <text evidence="1">Monomer. Associates with 30S ribosomal subunit, binds 16S rRNA.</text>
</comment>
<comment type="subcellular location">
    <subcellularLocation>
        <location evidence="1">Cytoplasm</location>
    </subcellularLocation>
</comment>
<comment type="similarity">
    <text evidence="1">Belongs to the TRAFAC class YlqF/YawG GTPase family. RsgA subfamily.</text>
</comment>
<proteinExistence type="inferred from homology"/>
<keyword id="KW-0963">Cytoplasm</keyword>
<keyword id="KW-0342">GTP-binding</keyword>
<keyword id="KW-0378">Hydrolase</keyword>
<keyword id="KW-0479">Metal-binding</keyword>
<keyword id="KW-0547">Nucleotide-binding</keyword>
<keyword id="KW-0690">Ribosome biogenesis</keyword>
<keyword id="KW-0694">RNA-binding</keyword>
<keyword id="KW-0699">rRNA-binding</keyword>
<keyword id="KW-0862">Zinc</keyword>
<reference key="1">
    <citation type="journal article" date="2009" name="Genome Biol.">
        <title>Genomic and genetic analyses of diversity and plant interactions of Pseudomonas fluorescens.</title>
        <authorList>
            <person name="Silby M.W."/>
            <person name="Cerdeno-Tarraga A.M."/>
            <person name="Vernikos G.S."/>
            <person name="Giddens S.R."/>
            <person name="Jackson R.W."/>
            <person name="Preston G.M."/>
            <person name="Zhang X.-X."/>
            <person name="Moon C.D."/>
            <person name="Gehrig S.M."/>
            <person name="Godfrey S.A.C."/>
            <person name="Knight C.G."/>
            <person name="Malone J.G."/>
            <person name="Robinson Z."/>
            <person name="Spiers A.J."/>
            <person name="Harris S."/>
            <person name="Challis G.L."/>
            <person name="Yaxley A.M."/>
            <person name="Harris D."/>
            <person name="Seeger K."/>
            <person name="Murphy L."/>
            <person name="Rutter S."/>
            <person name="Squares R."/>
            <person name="Quail M.A."/>
            <person name="Saunders E."/>
            <person name="Mavromatis K."/>
            <person name="Brettin T.S."/>
            <person name="Bentley S.D."/>
            <person name="Hothersall J."/>
            <person name="Stephens E."/>
            <person name="Thomas C.M."/>
            <person name="Parkhill J."/>
            <person name="Levy S.B."/>
            <person name="Rainey P.B."/>
            <person name="Thomson N.R."/>
        </authorList>
    </citation>
    <scope>NUCLEOTIDE SEQUENCE [LARGE SCALE GENOMIC DNA]</scope>
    <source>
        <strain>SBW25</strain>
    </source>
</reference>
<evidence type="ECO:0000255" key="1">
    <source>
        <dbReference type="HAMAP-Rule" id="MF_01820"/>
    </source>
</evidence>
<evidence type="ECO:0000255" key="2">
    <source>
        <dbReference type="PROSITE-ProRule" id="PRU01058"/>
    </source>
</evidence>
<organism>
    <name type="scientific">Pseudomonas fluorescens (strain SBW25)</name>
    <dbReference type="NCBI Taxonomy" id="216595"/>
    <lineage>
        <taxon>Bacteria</taxon>
        <taxon>Pseudomonadati</taxon>
        <taxon>Pseudomonadota</taxon>
        <taxon>Gammaproteobacteria</taxon>
        <taxon>Pseudomonadales</taxon>
        <taxon>Pseudomonadaceae</taxon>
        <taxon>Pseudomonas</taxon>
    </lineage>
</organism>
<protein>
    <recommendedName>
        <fullName evidence="1">Small ribosomal subunit biogenesis GTPase RsgA</fullName>
        <ecNumber evidence="1">3.6.1.-</ecNumber>
    </recommendedName>
</protein>
<accession>C3KDV4</accession>
<dbReference type="EC" id="3.6.1.-" evidence="1"/>
<dbReference type="EMBL" id="AM181176">
    <property type="protein sequence ID" value="CAY46786.1"/>
    <property type="molecule type" value="Genomic_DNA"/>
</dbReference>
<dbReference type="RefSeq" id="WP_003171340.1">
    <property type="nucleotide sequence ID" value="NC_012660.1"/>
</dbReference>
<dbReference type="SMR" id="C3KDV4"/>
<dbReference type="STRING" id="294.SRM1_00569"/>
<dbReference type="GeneID" id="93462111"/>
<dbReference type="eggNOG" id="COG1162">
    <property type="taxonomic scope" value="Bacteria"/>
</dbReference>
<dbReference type="HOGENOM" id="CLU_033617_2_0_6"/>
<dbReference type="OrthoDB" id="9809485at2"/>
<dbReference type="GO" id="GO:0005737">
    <property type="term" value="C:cytoplasm"/>
    <property type="evidence" value="ECO:0007669"/>
    <property type="project" value="UniProtKB-SubCell"/>
</dbReference>
<dbReference type="GO" id="GO:0005525">
    <property type="term" value="F:GTP binding"/>
    <property type="evidence" value="ECO:0007669"/>
    <property type="project" value="UniProtKB-UniRule"/>
</dbReference>
<dbReference type="GO" id="GO:0003924">
    <property type="term" value="F:GTPase activity"/>
    <property type="evidence" value="ECO:0007669"/>
    <property type="project" value="UniProtKB-UniRule"/>
</dbReference>
<dbReference type="GO" id="GO:0046872">
    <property type="term" value="F:metal ion binding"/>
    <property type="evidence" value="ECO:0007669"/>
    <property type="project" value="UniProtKB-KW"/>
</dbReference>
<dbReference type="GO" id="GO:0019843">
    <property type="term" value="F:rRNA binding"/>
    <property type="evidence" value="ECO:0007669"/>
    <property type="project" value="UniProtKB-KW"/>
</dbReference>
<dbReference type="GO" id="GO:0042274">
    <property type="term" value="P:ribosomal small subunit biogenesis"/>
    <property type="evidence" value="ECO:0007669"/>
    <property type="project" value="UniProtKB-UniRule"/>
</dbReference>
<dbReference type="CDD" id="cd01854">
    <property type="entry name" value="YjeQ_EngC"/>
    <property type="match status" value="1"/>
</dbReference>
<dbReference type="Gene3D" id="2.40.50.140">
    <property type="entry name" value="Nucleic acid-binding proteins"/>
    <property type="match status" value="1"/>
</dbReference>
<dbReference type="Gene3D" id="3.40.50.300">
    <property type="entry name" value="P-loop containing nucleotide triphosphate hydrolases"/>
    <property type="match status" value="1"/>
</dbReference>
<dbReference type="Gene3D" id="1.10.40.50">
    <property type="entry name" value="Probable gtpase engc, domain 3"/>
    <property type="match status" value="1"/>
</dbReference>
<dbReference type="HAMAP" id="MF_01820">
    <property type="entry name" value="GTPase_RsgA"/>
    <property type="match status" value="1"/>
</dbReference>
<dbReference type="InterPro" id="IPR030378">
    <property type="entry name" value="G_CP_dom"/>
</dbReference>
<dbReference type="InterPro" id="IPR012340">
    <property type="entry name" value="NA-bd_OB-fold"/>
</dbReference>
<dbReference type="InterPro" id="IPR027417">
    <property type="entry name" value="P-loop_NTPase"/>
</dbReference>
<dbReference type="InterPro" id="IPR004881">
    <property type="entry name" value="Ribosome_biogen_GTPase_RsgA"/>
</dbReference>
<dbReference type="InterPro" id="IPR010914">
    <property type="entry name" value="RsgA_GTPase_dom"/>
</dbReference>
<dbReference type="NCBIfam" id="NF008931">
    <property type="entry name" value="PRK12288.1"/>
    <property type="match status" value="1"/>
</dbReference>
<dbReference type="NCBIfam" id="TIGR00157">
    <property type="entry name" value="ribosome small subunit-dependent GTPase A"/>
    <property type="match status" value="1"/>
</dbReference>
<dbReference type="PANTHER" id="PTHR32120">
    <property type="entry name" value="SMALL RIBOSOMAL SUBUNIT BIOGENESIS GTPASE RSGA"/>
    <property type="match status" value="1"/>
</dbReference>
<dbReference type="PANTHER" id="PTHR32120:SF11">
    <property type="entry name" value="SMALL RIBOSOMAL SUBUNIT BIOGENESIS GTPASE RSGA 1, MITOCHONDRIAL-RELATED"/>
    <property type="match status" value="1"/>
</dbReference>
<dbReference type="Pfam" id="PF03193">
    <property type="entry name" value="RsgA_GTPase"/>
    <property type="match status" value="1"/>
</dbReference>
<dbReference type="SUPFAM" id="SSF52540">
    <property type="entry name" value="P-loop containing nucleoside triphosphate hydrolases"/>
    <property type="match status" value="1"/>
</dbReference>
<dbReference type="PROSITE" id="PS50936">
    <property type="entry name" value="ENGC_GTPASE"/>
    <property type="match status" value="1"/>
</dbReference>
<dbReference type="PROSITE" id="PS51721">
    <property type="entry name" value="G_CP"/>
    <property type="match status" value="1"/>
</dbReference>